<accession>A5WP89</accession>
<keyword id="KW-0067">ATP-binding</keyword>
<keyword id="KW-0143">Chaperone</keyword>
<keyword id="KW-0175">Coiled coil</keyword>
<keyword id="KW-0547">Nucleotide-binding</keyword>
<keyword id="KW-0647">Proteasome</keyword>
<protein>
    <recommendedName>
        <fullName evidence="1">Proteasome-associated ATPase</fullName>
    </recommendedName>
    <alternativeName>
        <fullName evidence="1">AAA ATPase forming ring-shaped complexes</fullName>
        <shortName evidence="1">ARC</shortName>
    </alternativeName>
    <alternativeName>
        <fullName evidence="1">Mycobacterial proteasome ATPase</fullName>
    </alternativeName>
</protein>
<sequence>MGESERSEAFGIPRDSPLSSGDAAELEQLRREAAVLREQLENAVGSHAPTRSARDIHQLEARIDSLAARNSKLMETLKEARQQLLALREEVDRLGQPPSGYGVLLATHDDDTVDVFTSGRKMRLTCSPNIDAASLKKGQTVRLNEALTVVEAGTFEAVGEISTLREILADGHRALVVGHADEERVVWLADPLIAEDLPDGLPEALNDDTRPRKLRPGDSLLVDTKAGYAFERIPKAEVEDLVLEEVPDVSYADIGGLSRQIEQIRDAVELPFLHKELYREYSLRPPKGVLLYGPPGCGKTLIAKAVANSLAKKMAEVRGDDAHEAKSYFLNIKGPELLNKFVGETERHIRLIFQRAREKASEGTPVIVFFDEMDSIFRTRGTGVSSDVETTVVPQLLSEIDGVEGLENVIVIGASNREDMIDPAILRPGRLDVKIKIERPDAEAAQDIYSKYLTEFLPVHADDLAEFDGDRSACIKAMIEKVVDRMYAEIDDNRFLEVTYANGDKEVMYFKDFNSGAMIQNVVDRAKKNAIKSVLETGQPGLRIQHLLDSIVDEFAENEDLPNTTNPDDWARISGKKGERIVYIRTLVTGKSSSASRAIDTESNLGQYL</sequence>
<feature type="chain" id="PRO_0000397004" description="Proteasome-associated ATPase">
    <location>
        <begin position="1"/>
        <end position="609"/>
    </location>
</feature>
<feature type="region of interest" description="Disordered" evidence="2">
    <location>
        <begin position="1"/>
        <end position="24"/>
    </location>
</feature>
<feature type="region of interest" description="Docks into pockets in the proteasome alpha-ring" evidence="1">
    <location>
        <begin position="608"/>
        <end position="609"/>
    </location>
</feature>
<feature type="coiled-coil region" evidence="1">
    <location>
        <begin position="20"/>
        <end position="96"/>
    </location>
</feature>
<feature type="binding site" evidence="1">
    <location>
        <begin position="296"/>
        <end position="301"/>
    </location>
    <ligand>
        <name>ATP</name>
        <dbReference type="ChEBI" id="CHEBI:30616"/>
    </ligand>
</feature>
<dbReference type="EMBL" id="CP000717">
    <property type="protein sequence ID" value="ABR06478.1"/>
    <property type="molecule type" value="Genomic_DNA"/>
</dbReference>
<dbReference type="SMR" id="A5WP89"/>
<dbReference type="KEGG" id="mtf:TBFG_12147"/>
<dbReference type="PATRIC" id="fig|336982.11.peg.2357"/>
<dbReference type="HOGENOM" id="CLU_036054_0_0_11"/>
<dbReference type="UniPathway" id="UPA00997"/>
<dbReference type="GO" id="GO:0000502">
    <property type="term" value="C:proteasome complex"/>
    <property type="evidence" value="ECO:0007669"/>
    <property type="project" value="UniProtKB-KW"/>
</dbReference>
<dbReference type="GO" id="GO:0005524">
    <property type="term" value="F:ATP binding"/>
    <property type="evidence" value="ECO:0007669"/>
    <property type="project" value="UniProtKB-UniRule"/>
</dbReference>
<dbReference type="GO" id="GO:0016887">
    <property type="term" value="F:ATP hydrolysis activity"/>
    <property type="evidence" value="ECO:0007669"/>
    <property type="project" value="UniProtKB-UniRule"/>
</dbReference>
<dbReference type="GO" id="GO:0019941">
    <property type="term" value="P:modification-dependent protein catabolic process"/>
    <property type="evidence" value="ECO:0007669"/>
    <property type="project" value="InterPro"/>
</dbReference>
<dbReference type="GO" id="GO:0010498">
    <property type="term" value="P:proteasomal protein catabolic process"/>
    <property type="evidence" value="ECO:0007669"/>
    <property type="project" value="InterPro"/>
</dbReference>
<dbReference type="FunFam" id="1.10.8.60:FF:000122">
    <property type="entry name" value="AAA ATPase forming ring-shaped complexes"/>
    <property type="match status" value="1"/>
</dbReference>
<dbReference type="FunFam" id="1.20.5.170:FF:000018">
    <property type="entry name" value="AAA ATPase forming ring-shaped complexes"/>
    <property type="match status" value="1"/>
</dbReference>
<dbReference type="FunFam" id="2.40.50.140:FF:000169">
    <property type="entry name" value="AAA ATPase forming ring-shaped complexes"/>
    <property type="match status" value="1"/>
</dbReference>
<dbReference type="FunFam" id="3.40.50.300:FF:000155">
    <property type="entry name" value="AAA ATPase forming ring-shaped complexes"/>
    <property type="match status" value="1"/>
</dbReference>
<dbReference type="Gene3D" id="1.10.8.60">
    <property type="match status" value="1"/>
</dbReference>
<dbReference type="Gene3D" id="1.20.5.170">
    <property type="match status" value="1"/>
</dbReference>
<dbReference type="Gene3D" id="2.40.50.140">
    <property type="entry name" value="Nucleic acid-binding proteins"/>
    <property type="match status" value="2"/>
</dbReference>
<dbReference type="Gene3D" id="3.40.50.300">
    <property type="entry name" value="P-loop containing nucleotide triphosphate hydrolases"/>
    <property type="match status" value="1"/>
</dbReference>
<dbReference type="HAMAP" id="MF_02112">
    <property type="entry name" value="ARC_ATPase"/>
    <property type="match status" value="1"/>
</dbReference>
<dbReference type="InterPro" id="IPR003593">
    <property type="entry name" value="AAA+_ATPase"/>
</dbReference>
<dbReference type="InterPro" id="IPR050168">
    <property type="entry name" value="AAA_ATPase_domain"/>
</dbReference>
<dbReference type="InterPro" id="IPR003959">
    <property type="entry name" value="ATPase_AAA_core"/>
</dbReference>
<dbReference type="InterPro" id="IPR003960">
    <property type="entry name" value="ATPase_AAA_CS"/>
</dbReference>
<dbReference type="InterPro" id="IPR012340">
    <property type="entry name" value="NA-bd_OB-fold"/>
</dbReference>
<dbReference type="InterPro" id="IPR027417">
    <property type="entry name" value="P-loop_NTPase"/>
</dbReference>
<dbReference type="InterPro" id="IPR032501">
    <property type="entry name" value="Prot_ATP_ID_OB_2nd"/>
</dbReference>
<dbReference type="InterPro" id="IPR041626">
    <property type="entry name" value="Prot_ATP_ID_OB_N"/>
</dbReference>
<dbReference type="InterPro" id="IPR022482">
    <property type="entry name" value="Proteasome_ATPase"/>
</dbReference>
<dbReference type="NCBIfam" id="TIGR03689">
    <property type="entry name" value="pup_AAA"/>
    <property type="match status" value="1"/>
</dbReference>
<dbReference type="PANTHER" id="PTHR23077">
    <property type="entry name" value="AAA-FAMILY ATPASE"/>
    <property type="match status" value="1"/>
</dbReference>
<dbReference type="PANTHER" id="PTHR23077:SF144">
    <property type="entry name" value="PROTEASOME-ASSOCIATED ATPASE"/>
    <property type="match status" value="1"/>
</dbReference>
<dbReference type="Pfam" id="PF00004">
    <property type="entry name" value="AAA"/>
    <property type="match status" value="1"/>
</dbReference>
<dbReference type="Pfam" id="PF16450">
    <property type="entry name" value="Prot_ATP_ID_OB_C"/>
    <property type="match status" value="1"/>
</dbReference>
<dbReference type="Pfam" id="PF17758">
    <property type="entry name" value="Prot_ATP_ID_OB_N"/>
    <property type="match status" value="1"/>
</dbReference>
<dbReference type="SMART" id="SM00382">
    <property type="entry name" value="AAA"/>
    <property type="match status" value="1"/>
</dbReference>
<dbReference type="SUPFAM" id="SSF52540">
    <property type="entry name" value="P-loop containing nucleoside triphosphate hydrolases"/>
    <property type="match status" value="1"/>
</dbReference>
<dbReference type="PROSITE" id="PS00674">
    <property type="entry name" value="AAA"/>
    <property type="match status" value="1"/>
</dbReference>
<reference key="1">
    <citation type="submission" date="2007-04" db="EMBL/GenBank/DDBJ databases">
        <title>The complete genome sequence of Mycobacterium tuberculosis F11.</title>
        <authorList>
            <person name="Birren B."/>
            <person name="Lander E."/>
            <person name="Galagan J."/>
            <person name="Devon K."/>
            <person name="Nusbaum C."/>
            <person name="Borowsky M.L."/>
            <person name="Grabherr M."/>
            <person name="Mauceli E."/>
            <person name="Brockman W."/>
            <person name="Young S."/>
            <person name="LaButti K."/>
            <person name="Pushparaj V."/>
            <person name="Sykes S."/>
            <person name="Baldwin J."/>
            <person name="Fitzgerald M."/>
            <person name="Bloom T."/>
            <person name="Zimmer A."/>
            <person name="Settipalli S."/>
            <person name="Shea T."/>
            <person name="Arachchi H."/>
            <person name="Macdonald P."/>
            <person name="Abouelleil A."/>
            <person name="Lui A."/>
            <person name="Priest M."/>
            <person name="Berlin A."/>
            <person name="Gearin G."/>
            <person name="Brown A."/>
            <person name="Aftuck L."/>
            <person name="Bessette D."/>
            <person name="Allen N."/>
            <person name="Lubonja R."/>
            <person name="Lokyitsang T."/>
            <person name="Matthews C."/>
            <person name="Dunbar C."/>
            <person name="Benamara M."/>
            <person name="Nguyen T."/>
            <person name="Negash T."/>
            <person name="DeCaprio D."/>
            <person name="Crawford M."/>
            <person name="Koehrsen M."/>
            <person name="Engels R."/>
            <person name="Montgomery P."/>
            <person name="Pearson M."/>
            <person name="Howarth C."/>
            <person name="Kodira C."/>
            <person name="Zeng Q."/>
            <person name="Yandava C."/>
            <person name="O'Leary S."/>
            <person name="Alvarado L."/>
            <person name="Victor T."/>
            <person name="Murray M."/>
        </authorList>
    </citation>
    <scope>NUCLEOTIDE SEQUENCE [LARGE SCALE GENOMIC DNA]</scope>
    <source>
        <strain>F11</strain>
    </source>
</reference>
<organism>
    <name type="scientific">Mycobacterium tuberculosis (strain F11)</name>
    <dbReference type="NCBI Taxonomy" id="336982"/>
    <lineage>
        <taxon>Bacteria</taxon>
        <taxon>Bacillati</taxon>
        <taxon>Actinomycetota</taxon>
        <taxon>Actinomycetes</taxon>
        <taxon>Mycobacteriales</taxon>
        <taxon>Mycobacteriaceae</taxon>
        <taxon>Mycobacterium</taxon>
        <taxon>Mycobacterium tuberculosis complex</taxon>
    </lineage>
</organism>
<proteinExistence type="inferred from homology"/>
<evidence type="ECO:0000255" key="1">
    <source>
        <dbReference type="HAMAP-Rule" id="MF_02112"/>
    </source>
</evidence>
<evidence type="ECO:0000256" key="2">
    <source>
        <dbReference type="SAM" id="MobiDB-lite"/>
    </source>
</evidence>
<gene>
    <name evidence="1" type="primary">mpa</name>
    <name type="ordered locus">TBFG_12147</name>
</gene>
<name>ARC_MYCTF</name>
<comment type="function">
    <text evidence="1">ATPase which is responsible for recognizing, binding, unfolding and translocation of pupylated proteins into the bacterial 20S proteasome core particle. May be essential for opening the gate of the 20S proteasome via an interaction with its C-terminus, thereby allowing substrate entry and access to the site of proteolysis. Thus, the C-termini of the proteasomal ATPase may function like a 'key in a lock' to induce gate opening and therefore regulate proteolysis.</text>
</comment>
<comment type="pathway">
    <text evidence="1">Protein degradation; proteasomal Pup-dependent pathway.</text>
</comment>
<comment type="subunit">
    <text evidence="1">Homohexamer. Assembles into a hexameric ring structure that caps the 20S proteasome core. Strongly interacts with the prokaryotic ubiquitin-like protein Pup through a hydrophobic interface; the interacting region of ARC lies in its N-terminal coiled-coil domain. There is one Pup binding site per ARC hexamer ring. Upon ATP-binding, the C-terminus of ARC interacts with the alpha-rings of the proteasome core, possibly by binding to the intersubunit pockets.</text>
</comment>
<comment type="domain">
    <text evidence="1">Consists of three main regions, an N-terminal coiled-coil domain that binds to protein Pup and functions as a docking station, an interdomain involved in ARC hexamerization, and a C-terminal ATPase domain of the AAA type.</text>
</comment>
<comment type="similarity">
    <text evidence="1">Belongs to the AAA ATPase family.</text>
</comment>